<reference key="1">
    <citation type="journal article" date="2006" name="Proc. Natl. Acad. Sci. U.S.A.">
        <title>Molecular genetic anatomy of inter- and intraserotype variation in the human bacterial pathogen group A Streptococcus.</title>
        <authorList>
            <person name="Beres S.B."/>
            <person name="Richter E.W."/>
            <person name="Nagiec M.J."/>
            <person name="Sumby P."/>
            <person name="Porcella S.F."/>
            <person name="DeLeo F.R."/>
            <person name="Musser J.M."/>
        </authorList>
    </citation>
    <scope>NUCLEOTIDE SEQUENCE [LARGE SCALE GENOMIC DNA]</scope>
    <source>
        <strain>MGAS10750</strain>
    </source>
</reference>
<sequence length="183" mass="20495">MTYLSQIEALLFVAGEEGLSLRHLASMLSLTPTALQQQLEKLSQKYEKDQHSSLCLIETANTYRLVTKEGFAELLRAYAKTPMNQSLSRASLEVLSIVAYKQPITRIEIDDIRGVNSSGALSKLLAFDLIREAGKKDVVGRPHLYATTDYFLDYMGINHLDELIEVSAVEPADEEIALFRTQD</sequence>
<organism>
    <name type="scientific">Streptococcus pyogenes serotype M4 (strain MGAS10750)</name>
    <dbReference type="NCBI Taxonomy" id="370554"/>
    <lineage>
        <taxon>Bacteria</taxon>
        <taxon>Bacillati</taxon>
        <taxon>Bacillota</taxon>
        <taxon>Bacilli</taxon>
        <taxon>Lactobacillales</taxon>
        <taxon>Streptococcaceae</taxon>
        <taxon>Streptococcus</taxon>
    </lineage>
</organism>
<name>SCPB_STRPF</name>
<comment type="function">
    <text evidence="1">Participates in chromosomal partition during cell division. May act via the formation of a condensin-like complex containing Smc and ScpA that pull DNA away from mid-cell into both cell halves.</text>
</comment>
<comment type="subunit">
    <text evidence="1">Homodimer. Homodimerization may be required to stabilize the binding of ScpA to the Smc head domains. Component of a cohesin-like complex composed of ScpA, ScpB and the Smc homodimer, in which ScpA and ScpB bind to the head domain of Smc. The presence of the three proteins is required for the association of the complex with DNA.</text>
</comment>
<comment type="subcellular location">
    <subcellularLocation>
        <location evidence="1">Cytoplasm</location>
    </subcellularLocation>
    <text evidence="1">Associated with two foci at the outer edges of the nucleoid region in young cells, and at four foci within both cell halves in older cells.</text>
</comment>
<comment type="similarity">
    <text evidence="1">Belongs to the ScpB family.</text>
</comment>
<feature type="chain" id="PRO_0000273313" description="Segregation and condensation protein B">
    <location>
        <begin position="1"/>
        <end position="183"/>
    </location>
</feature>
<proteinExistence type="inferred from homology"/>
<keyword id="KW-0131">Cell cycle</keyword>
<keyword id="KW-0132">Cell division</keyword>
<keyword id="KW-0159">Chromosome partition</keyword>
<keyword id="KW-0963">Cytoplasm</keyword>
<evidence type="ECO:0000255" key="1">
    <source>
        <dbReference type="HAMAP-Rule" id="MF_01804"/>
    </source>
</evidence>
<gene>
    <name evidence="1" type="primary">scpB</name>
    <name type="ordered locus">MGAS10750_Spy0303</name>
</gene>
<accession>Q1J8A8</accession>
<protein>
    <recommendedName>
        <fullName evidence="1">Segregation and condensation protein B</fullName>
    </recommendedName>
</protein>
<dbReference type="EMBL" id="CP000262">
    <property type="protein sequence ID" value="ABF37253.1"/>
    <property type="molecule type" value="Genomic_DNA"/>
</dbReference>
<dbReference type="SMR" id="Q1J8A8"/>
<dbReference type="KEGG" id="spi:MGAS10750_Spy0303"/>
<dbReference type="HOGENOM" id="CLU_045647_5_3_9"/>
<dbReference type="Proteomes" id="UP000002434">
    <property type="component" value="Chromosome"/>
</dbReference>
<dbReference type="GO" id="GO:0005737">
    <property type="term" value="C:cytoplasm"/>
    <property type="evidence" value="ECO:0007669"/>
    <property type="project" value="UniProtKB-SubCell"/>
</dbReference>
<dbReference type="GO" id="GO:0051301">
    <property type="term" value="P:cell division"/>
    <property type="evidence" value="ECO:0007669"/>
    <property type="project" value="UniProtKB-KW"/>
</dbReference>
<dbReference type="GO" id="GO:0051304">
    <property type="term" value="P:chromosome separation"/>
    <property type="evidence" value="ECO:0007669"/>
    <property type="project" value="InterPro"/>
</dbReference>
<dbReference type="GO" id="GO:0006260">
    <property type="term" value="P:DNA replication"/>
    <property type="evidence" value="ECO:0007669"/>
    <property type="project" value="UniProtKB-UniRule"/>
</dbReference>
<dbReference type="Gene3D" id="1.10.10.10">
    <property type="entry name" value="Winged helix-like DNA-binding domain superfamily/Winged helix DNA-binding domain"/>
    <property type="match status" value="2"/>
</dbReference>
<dbReference type="HAMAP" id="MF_01804">
    <property type="entry name" value="ScpB"/>
    <property type="match status" value="1"/>
</dbReference>
<dbReference type="InterPro" id="IPR005234">
    <property type="entry name" value="ScpB_csome_segregation"/>
</dbReference>
<dbReference type="InterPro" id="IPR036388">
    <property type="entry name" value="WH-like_DNA-bd_sf"/>
</dbReference>
<dbReference type="InterPro" id="IPR036390">
    <property type="entry name" value="WH_DNA-bd_sf"/>
</dbReference>
<dbReference type="NCBIfam" id="TIGR00281">
    <property type="entry name" value="SMC-Scp complex subunit ScpB"/>
    <property type="match status" value="1"/>
</dbReference>
<dbReference type="PANTHER" id="PTHR34298">
    <property type="entry name" value="SEGREGATION AND CONDENSATION PROTEIN B"/>
    <property type="match status" value="1"/>
</dbReference>
<dbReference type="PANTHER" id="PTHR34298:SF2">
    <property type="entry name" value="SEGREGATION AND CONDENSATION PROTEIN B"/>
    <property type="match status" value="1"/>
</dbReference>
<dbReference type="Pfam" id="PF04079">
    <property type="entry name" value="SMC_ScpB"/>
    <property type="match status" value="1"/>
</dbReference>
<dbReference type="PIRSF" id="PIRSF019345">
    <property type="entry name" value="ScpB"/>
    <property type="match status" value="1"/>
</dbReference>
<dbReference type="SUPFAM" id="SSF46785">
    <property type="entry name" value="Winged helix' DNA-binding domain"/>
    <property type="match status" value="2"/>
</dbReference>